<sequence length="138" mass="15613">MLVIKMLFKYQIKTNKREELVDITPYIISAISESKVKDGIAVIYVPHTTAGITINENADPSVKHDIINFLSHLIPKNWNFTHLEGNSDAHIKSSLVGCSQTIIIKDGKPLLGTWQGIFFAEFDGPRRREFYVKIIGDK</sequence>
<organism>
    <name type="scientific">Methanocaldococcus jannaschii (strain ATCC 43067 / DSM 2661 / JAL-1 / JCM 10045 / NBRC 100440)</name>
    <name type="common">Methanococcus jannaschii</name>
    <dbReference type="NCBI Taxonomy" id="243232"/>
    <lineage>
        <taxon>Archaea</taxon>
        <taxon>Methanobacteriati</taxon>
        <taxon>Methanobacteriota</taxon>
        <taxon>Methanomada group</taxon>
        <taxon>Methanococci</taxon>
        <taxon>Methanococcales</taxon>
        <taxon>Methanocaldococcaceae</taxon>
        <taxon>Methanocaldococcus</taxon>
    </lineage>
</organism>
<protein>
    <recommendedName>
        <fullName>UPF0047 protein MJ1081</fullName>
    </recommendedName>
</protein>
<keyword id="KW-1185">Reference proteome</keyword>
<dbReference type="EMBL" id="L77117">
    <property type="protein sequence ID" value="AAB99083.1"/>
    <property type="molecule type" value="Genomic_DNA"/>
</dbReference>
<dbReference type="PIR" id="H64434">
    <property type="entry name" value="H64434"/>
</dbReference>
<dbReference type="SMR" id="Q58481"/>
<dbReference type="FunCoup" id="Q58481">
    <property type="interactions" value="37"/>
</dbReference>
<dbReference type="STRING" id="243232.MJ_1081"/>
<dbReference type="PaxDb" id="243232-MJ_1081"/>
<dbReference type="EnsemblBacteria" id="AAB99083">
    <property type="protein sequence ID" value="AAB99083"/>
    <property type="gene ID" value="MJ_1081"/>
</dbReference>
<dbReference type="KEGG" id="mja:MJ_1081"/>
<dbReference type="eggNOG" id="arCOG04214">
    <property type="taxonomic scope" value="Archaea"/>
</dbReference>
<dbReference type="HOGENOM" id="CLU_096980_1_1_2"/>
<dbReference type="InParanoid" id="Q58481"/>
<dbReference type="PhylomeDB" id="Q58481"/>
<dbReference type="Proteomes" id="UP000000805">
    <property type="component" value="Chromosome"/>
</dbReference>
<dbReference type="Gene3D" id="2.60.120.460">
    <property type="entry name" value="YjbQ-like"/>
    <property type="match status" value="1"/>
</dbReference>
<dbReference type="InterPro" id="IPR001602">
    <property type="entry name" value="UPF0047_YjbQ-like"/>
</dbReference>
<dbReference type="InterPro" id="IPR035917">
    <property type="entry name" value="YjbQ-like_sf"/>
</dbReference>
<dbReference type="NCBIfam" id="TIGR00149">
    <property type="entry name" value="TIGR00149_YjbQ"/>
    <property type="match status" value="1"/>
</dbReference>
<dbReference type="PANTHER" id="PTHR30615">
    <property type="entry name" value="UNCHARACTERIZED PROTEIN YJBQ-RELATED"/>
    <property type="match status" value="1"/>
</dbReference>
<dbReference type="PANTHER" id="PTHR30615:SF8">
    <property type="entry name" value="UPF0047 PROTEIN C4A8.02C"/>
    <property type="match status" value="1"/>
</dbReference>
<dbReference type="Pfam" id="PF01894">
    <property type="entry name" value="UPF0047"/>
    <property type="match status" value="1"/>
</dbReference>
<dbReference type="PIRSF" id="PIRSF004681">
    <property type="entry name" value="UCP004681"/>
    <property type="match status" value="1"/>
</dbReference>
<dbReference type="SUPFAM" id="SSF111038">
    <property type="entry name" value="YjbQ-like"/>
    <property type="match status" value="1"/>
</dbReference>
<dbReference type="PROSITE" id="PS01314">
    <property type="entry name" value="UPF0047"/>
    <property type="match status" value="1"/>
</dbReference>
<name>Y1081_METJA</name>
<reference key="1">
    <citation type="journal article" date="1996" name="Science">
        <title>Complete genome sequence of the methanogenic archaeon, Methanococcus jannaschii.</title>
        <authorList>
            <person name="Bult C.J."/>
            <person name="White O."/>
            <person name="Olsen G.J."/>
            <person name="Zhou L."/>
            <person name="Fleischmann R.D."/>
            <person name="Sutton G.G."/>
            <person name="Blake J.A."/>
            <person name="FitzGerald L.M."/>
            <person name="Clayton R.A."/>
            <person name="Gocayne J.D."/>
            <person name="Kerlavage A.R."/>
            <person name="Dougherty B.A."/>
            <person name="Tomb J.-F."/>
            <person name="Adams M.D."/>
            <person name="Reich C.I."/>
            <person name="Overbeek R."/>
            <person name="Kirkness E.F."/>
            <person name="Weinstock K.G."/>
            <person name="Merrick J.M."/>
            <person name="Glodek A."/>
            <person name="Scott J.L."/>
            <person name="Geoghagen N.S.M."/>
            <person name="Weidman J.F."/>
            <person name="Fuhrmann J.L."/>
            <person name="Nguyen D."/>
            <person name="Utterback T.R."/>
            <person name="Kelley J.M."/>
            <person name="Peterson J.D."/>
            <person name="Sadow P.W."/>
            <person name="Hanna M.C."/>
            <person name="Cotton M.D."/>
            <person name="Roberts K.M."/>
            <person name="Hurst M.A."/>
            <person name="Kaine B.P."/>
            <person name="Borodovsky M."/>
            <person name="Klenk H.-P."/>
            <person name="Fraser C.M."/>
            <person name="Smith H.O."/>
            <person name="Woese C.R."/>
            <person name="Venter J.C."/>
        </authorList>
    </citation>
    <scope>NUCLEOTIDE SEQUENCE [LARGE SCALE GENOMIC DNA]</scope>
    <source>
        <strain>ATCC 43067 / DSM 2661 / JAL-1 / JCM 10045 / NBRC 100440</strain>
    </source>
</reference>
<evidence type="ECO:0000305" key="1"/>
<gene>
    <name type="ordered locus">MJ1081</name>
</gene>
<feature type="chain" id="PRO_0000088525" description="UPF0047 protein MJ1081">
    <location>
        <begin position="1"/>
        <end position="138"/>
    </location>
</feature>
<accession>Q58481</accession>
<proteinExistence type="inferred from homology"/>
<comment type="similarity">
    <text evidence="1">Belongs to the UPF0047 family.</text>
</comment>